<protein>
    <recommendedName>
        <fullName>Golgi SNAP receptor complex member 1</fullName>
    </recommendedName>
    <alternativeName>
        <fullName>28 kDa Golgi SNARE protein</fullName>
    </alternativeName>
    <alternativeName>
        <fullName>28 kDa cis-Golgi SNARE p28</fullName>
        <shortName>GOS-28</shortName>
    </alternativeName>
</protein>
<accession>O88630</accession>
<accession>Q91VU9</accession>
<keyword id="KW-0007">Acetylation</keyword>
<keyword id="KW-0175">Coiled coil</keyword>
<keyword id="KW-0903">Direct protein sequencing</keyword>
<keyword id="KW-0931">ER-Golgi transport</keyword>
<keyword id="KW-0333">Golgi apparatus</keyword>
<keyword id="KW-0472">Membrane</keyword>
<keyword id="KW-0597">Phosphoprotein</keyword>
<keyword id="KW-0653">Protein transport</keyword>
<keyword id="KW-1185">Reference proteome</keyword>
<keyword id="KW-0812">Transmembrane</keyword>
<keyword id="KW-1133">Transmembrane helix</keyword>
<keyword id="KW-0813">Transport</keyword>
<comment type="function">
    <text evidence="1">Involved in transport from the ER to the Golgi apparatus as well as in intra-Golgi transport. It belongs to a super-family of proteins called t-SNAREs or soluble NSF (N-ethylmaleimide-sensitive factor) attachment protein receptor. May play a protective role against hydrogen peroxide induced cytotoxicity under glutathione depleted conditions in neuronal cells by regulating the intracellular ROS levels via inhibition of p38 MAPK (MAPK11, MAPK12, MAPK13 and MAPK14). Participates in docking and fusion stage of ER to cis-Golgi transport. Plays an important physiological role in VLDL-transport vesicle-Golgi fusion and thus in VLDL delivery to the hepatic cis-Golgi (By similarity).</text>
</comment>
<comment type="subunit">
    <text evidence="1">Component of several multiprotein Golgi SNARE complexes. Identified in a SNARE complex with BET1, STX5 and YKT6, in a SNARE complex with BET1L, STX5 and YKT6, in a SNARE complex with STX5, GOSR2, SEC22B and BET1, and in complex with STX5 and COG3. Interacts with GABARAPL2 (By similarity).</text>
</comment>
<comment type="subcellular location">
    <subcellularLocation>
        <location evidence="5">Golgi apparatus membrane</location>
        <topology evidence="5">Single-pass type IV membrane protein</topology>
    </subcellularLocation>
    <text evidence="1">Localizes throughout the Golgi apparatus, with lowest levels in the trans-Golgi network. Enriched on vesicular components at the terminal rims of the Golgi.</text>
</comment>
<comment type="induction">
    <text evidence="5">Decreased levels in 25-hydroxycholesterol treated melanocytes (at protein level).</text>
</comment>
<comment type="similarity">
    <text evidence="6">Belongs to the GOSR1 family.</text>
</comment>
<reference key="1">
    <citation type="submission" date="1998-07" db="EMBL/GenBank/DDBJ databases">
        <title>Mouse cis-Golgi p28 (GS28) mRNA.</title>
        <authorList>
            <person name="Bui T.D."/>
            <person name="Subramaniam V.N."/>
            <person name="Hong W."/>
        </authorList>
    </citation>
    <scope>NUCLEOTIDE SEQUENCE [MRNA]</scope>
</reference>
<reference key="2">
    <citation type="journal article" date="2005" name="Science">
        <title>The transcriptional landscape of the mammalian genome.</title>
        <authorList>
            <person name="Carninci P."/>
            <person name="Kasukawa T."/>
            <person name="Katayama S."/>
            <person name="Gough J."/>
            <person name="Frith M.C."/>
            <person name="Maeda N."/>
            <person name="Oyama R."/>
            <person name="Ravasi T."/>
            <person name="Lenhard B."/>
            <person name="Wells C."/>
            <person name="Kodzius R."/>
            <person name="Shimokawa K."/>
            <person name="Bajic V.B."/>
            <person name="Brenner S.E."/>
            <person name="Batalov S."/>
            <person name="Forrest A.R."/>
            <person name="Zavolan M."/>
            <person name="Davis M.J."/>
            <person name="Wilming L.G."/>
            <person name="Aidinis V."/>
            <person name="Allen J.E."/>
            <person name="Ambesi-Impiombato A."/>
            <person name="Apweiler R."/>
            <person name="Aturaliya R.N."/>
            <person name="Bailey T.L."/>
            <person name="Bansal M."/>
            <person name="Baxter L."/>
            <person name="Beisel K.W."/>
            <person name="Bersano T."/>
            <person name="Bono H."/>
            <person name="Chalk A.M."/>
            <person name="Chiu K.P."/>
            <person name="Choudhary V."/>
            <person name="Christoffels A."/>
            <person name="Clutterbuck D.R."/>
            <person name="Crowe M.L."/>
            <person name="Dalla E."/>
            <person name="Dalrymple B.P."/>
            <person name="de Bono B."/>
            <person name="Della Gatta G."/>
            <person name="di Bernardo D."/>
            <person name="Down T."/>
            <person name="Engstrom P."/>
            <person name="Fagiolini M."/>
            <person name="Faulkner G."/>
            <person name="Fletcher C.F."/>
            <person name="Fukushima T."/>
            <person name="Furuno M."/>
            <person name="Futaki S."/>
            <person name="Gariboldi M."/>
            <person name="Georgii-Hemming P."/>
            <person name="Gingeras T.R."/>
            <person name="Gojobori T."/>
            <person name="Green R.E."/>
            <person name="Gustincich S."/>
            <person name="Harbers M."/>
            <person name="Hayashi Y."/>
            <person name="Hensch T.K."/>
            <person name="Hirokawa N."/>
            <person name="Hill D."/>
            <person name="Huminiecki L."/>
            <person name="Iacono M."/>
            <person name="Ikeo K."/>
            <person name="Iwama A."/>
            <person name="Ishikawa T."/>
            <person name="Jakt M."/>
            <person name="Kanapin A."/>
            <person name="Katoh M."/>
            <person name="Kawasawa Y."/>
            <person name="Kelso J."/>
            <person name="Kitamura H."/>
            <person name="Kitano H."/>
            <person name="Kollias G."/>
            <person name="Krishnan S.P."/>
            <person name="Kruger A."/>
            <person name="Kummerfeld S.K."/>
            <person name="Kurochkin I.V."/>
            <person name="Lareau L.F."/>
            <person name="Lazarevic D."/>
            <person name="Lipovich L."/>
            <person name="Liu J."/>
            <person name="Liuni S."/>
            <person name="McWilliam S."/>
            <person name="Madan Babu M."/>
            <person name="Madera M."/>
            <person name="Marchionni L."/>
            <person name="Matsuda H."/>
            <person name="Matsuzawa S."/>
            <person name="Miki H."/>
            <person name="Mignone F."/>
            <person name="Miyake S."/>
            <person name="Morris K."/>
            <person name="Mottagui-Tabar S."/>
            <person name="Mulder N."/>
            <person name="Nakano N."/>
            <person name="Nakauchi H."/>
            <person name="Ng P."/>
            <person name="Nilsson R."/>
            <person name="Nishiguchi S."/>
            <person name="Nishikawa S."/>
            <person name="Nori F."/>
            <person name="Ohara O."/>
            <person name="Okazaki Y."/>
            <person name="Orlando V."/>
            <person name="Pang K.C."/>
            <person name="Pavan W.J."/>
            <person name="Pavesi G."/>
            <person name="Pesole G."/>
            <person name="Petrovsky N."/>
            <person name="Piazza S."/>
            <person name="Reed J."/>
            <person name="Reid J.F."/>
            <person name="Ring B.Z."/>
            <person name="Ringwald M."/>
            <person name="Rost B."/>
            <person name="Ruan Y."/>
            <person name="Salzberg S.L."/>
            <person name="Sandelin A."/>
            <person name="Schneider C."/>
            <person name="Schoenbach C."/>
            <person name="Sekiguchi K."/>
            <person name="Semple C.A."/>
            <person name="Seno S."/>
            <person name="Sessa L."/>
            <person name="Sheng Y."/>
            <person name="Shibata Y."/>
            <person name="Shimada H."/>
            <person name="Shimada K."/>
            <person name="Silva D."/>
            <person name="Sinclair B."/>
            <person name="Sperling S."/>
            <person name="Stupka E."/>
            <person name="Sugiura K."/>
            <person name="Sultana R."/>
            <person name="Takenaka Y."/>
            <person name="Taki K."/>
            <person name="Tammoja K."/>
            <person name="Tan S.L."/>
            <person name="Tang S."/>
            <person name="Taylor M.S."/>
            <person name="Tegner J."/>
            <person name="Teichmann S.A."/>
            <person name="Ueda H.R."/>
            <person name="van Nimwegen E."/>
            <person name="Verardo R."/>
            <person name="Wei C.L."/>
            <person name="Yagi K."/>
            <person name="Yamanishi H."/>
            <person name="Zabarovsky E."/>
            <person name="Zhu S."/>
            <person name="Zimmer A."/>
            <person name="Hide W."/>
            <person name="Bult C."/>
            <person name="Grimmond S.M."/>
            <person name="Teasdale R.D."/>
            <person name="Liu E.T."/>
            <person name="Brusic V."/>
            <person name="Quackenbush J."/>
            <person name="Wahlestedt C."/>
            <person name="Mattick J.S."/>
            <person name="Hume D.A."/>
            <person name="Kai C."/>
            <person name="Sasaki D."/>
            <person name="Tomaru Y."/>
            <person name="Fukuda S."/>
            <person name="Kanamori-Katayama M."/>
            <person name="Suzuki M."/>
            <person name="Aoki J."/>
            <person name="Arakawa T."/>
            <person name="Iida J."/>
            <person name="Imamura K."/>
            <person name="Itoh M."/>
            <person name="Kato T."/>
            <person name="Kawaji H."/>
            <person name="Kawagashira N."/>
            <person name="Kawashima T."/>
            <person name="Kojima M."/>
            <person name="Kondo S."/>
            <person name="Konno H."/>
            <person name="Nakano K."/>
            <person name="Ninomiya N."/>
            <person name="Nishio T."/>
            <person name="Okada M."/>
            <person name="Plessy C."/>
            <person name="Shibata K."/>
            <person name="Shiraki T."/>
            <person name="Suzuki S."/>
            <person name="Tagami M."/>
            <person name="Waki K."/>
            <person name="Watahiki A."/>
            <person name="Okamura-Oho Y."/>
            <person name="Suzuki H."/>
            <person name="Kawai J."/>
            <person name="Hayashizaki Y."/>
        </authorList>
    </citation>
    <scope>NUCLEOTIDE SEQUENCE [LARGE SCALE MRNA]</scope>
    <source>
        <strain>C57BL/6J</strain>
        <strain>NOD</strain>
        <tissue>Head</tissue>
        <tissue>Testis</tissue>
    </source>
</reference>
<reference key="3">
    <citation type="journal article" date="2009" name="PLoS Biol.">
        <title>Lineage-specific biology revealed by a finished genome assembly of the mouse.</title>
        <authorList>
            <person name="Church D.M."/>
            <person name="Goodstadt L."/>
            <person name="Hillier L.W."/>
            <person name="Zody M.C."/>
            <person name="Goldstein S."/>
            <person name="She X."/>
            <person name="Bult C.J."/>
            <person name="Agarwala R."/>
            <person name="Cherry J.L."/>
            <person name="DiCuccio M."/>
            <person name="Hlavina W."/>
            <person name="Kapustin Y."/>
            <person name="Meric P."/>
            <person name="Maglott D."/>
            <person name="Birtle Z."/>
            <person name="Marques A.C."/>
            <person name="Graves T."/>
            <person name="Zhou S."/>
            <person name="Teague B."/>
            <person name="Potamousis K."/>
            <person name="Churas C."/>
            <person name="Place M."/>
            <person name="Herschleb J."/>
            <person name="Runnheim R."/>
            <person name="Forrest D."/>
            <person name="Amos-Landgraf J."/>
            <person name="Schwartz D.C."/>
            <person name="Cheng Z."/>
            <person name="Lindblad-Toh K."/>
            <person name="Eichler E.E."/>
            <person name="Ponting C.P."/>
        </authorList>
    </citation>
    <scope>NUCLEOTIDE SEQUENCE [LARGE SCALE GENOMIC DNA]</scope>
    <source>
        <strain>C57BL/6J</strain>
    </source>
</reference>
<reference key="4">
    <citation type="submission" date="2005-07" db="EMBL/GenBank/DDBJ databases">
        <authorList>
            <person name="Mural R.J."/>
            <person name="Adams M.D."/>
            <person name="Myers E.W."/>
            <person name="Smith H.O."/>
            <person name="Venter J.C."/>
        </authorList>
    </citation>
    <scope>NUCLEOTIDE SEQUENCE [LARGE SCALE GENOMIC DNA]</scope>
</reference>
<reference key="5">
    <citation type="journal article" date="2004" name="Genome Res.">
        <title>The status, quality, and expansion of the NIH full-length cDNA project: the Mammalian Gene Collection (MGC).</title>
        <authorList>
            <consortium name="The MGC Project Team"/>
        </authorList>
    </citation>
    <scope>NUCLEOTIDE SEQUENCE [LARGE SCALE MRNA]</scope>
    <source>
        <strain>FVB/N</strain>
        <tissue>Mammary tumor</tissue>
    </source>
</reference>
<reference key="6">
    <citation type="submission" date="2009-01" db="UniProtKB">
        <authorList>
            <person name="Lubec G."/>
            <person name="Sunyer B."/>
            <person name="Chen W.-Q."/>
        </authorList>
    </citation>
    <scope>PROTEIN SEQUENCE OF 33-49</scope>
    <scope>IDENTIFICATION BY MASS SPECTROMETRY</scope>
    <source>
        <strain>OF1</strain>
        <tissue>Hippocampus</tissue>
    </source>
</reference>
<reference key="7">
    <citation type="journal article" date="2004" name="Pigment Cell Res.">
        <title>25-hydroxycholesterol acts in the Golgi compartment to induce degradation of tyrosinase.</title>
        <authorList>
            <person name="Hall A.M."/>
            <person name="Krishnamoorthy L."/>
            <person name="Orlow S.J."/>
        </authorList>
    </citation>
    <scope>SUBCELLULAR LOCATION</scope>
    <scope>INDUCTION BY 25-HYDROXYCHOLESTEROL</scope>
</reference>
<reference key="8">
    <citation type="journal article" date="2010" name="Cell">
        <title>A tissue-specific atlas of mouse protein phosphorylation and expression.</title>
        <authorList>
            <person name="Huttlin E.L."/>
            <person name="Jedrychowski M.P."/>
            <person name="Elias J.E."/>
            <person name="Goswami T."/>
            <person name="Rad R."/>
            <person name="Beausoleil S.A."/>
            <person name="Villen J."/>
            <person name="Haas W."/>
            <person name="Sowa M.E."/>
            <person name="Gygi S.P."/>
        </authorList>
    </citation>
    <scope>IDENTIFICATION BY MASS SPECTROMETRY [LARGE SCALE ANALYSIS]</scope>
    <source>
        <tissue>Brain</tissue>
        <tissue>Kidney</tissue>
        <tissue>Lung</tissue>
        <tissue>Pancreas</tissue>
        <tissue>Spleen</tissue>
        <tissue>Testis</tissue>
    </source>
</reference>
<evidence type="ECO:0000250" key="1"/>
<evidence type="ECO:0000250" key="2">
    <source>
        <dbReference type="UniProtKB" id="O95249"/>
    </source>
</evidence>
<evidence type="ECO:0000255" key="3"/>
<evidence type="ECO:0000256" key="4">
    <source>
        <dbReference type="SAM" id="MobiDB-lite"/>
    </source>
</evidence>
<evidence type="ECO:0000269" key="5">
    <source>
    </source>
</evidence>
<evidence type="ECO:0000305" key="6"/>
<gene>
    <name type="primary">Gosr1</name>
    <name type="synonym">Gs28</name>
</gene>
<organism>
    <name type="scientific">Mus musculus</name>
    <name type="common">Mouse</name>
    <dbReference type="NCBI Taxonomy" id="10090"/>
    <lineage>
        <taxon>Eukaryota</taxon>
        <taxon>Metazoa</taxon>
        <taxon>Chordata</taxon>
        <taxon>Craniata</taxon>
        <taxon>Vertebrata</taxon>
        <taxon>Euteleostomi</taxon>
        <taxon>Mammalia</taxon>
        <taxon>Eutheria</taxon>
        <taxon>Euarchontoglires</taxon>
        <taxon>Glires</taxon>
        <taxon>Rodentia</taxon>
        <taxon>Myomorpha</taxon>
        <taxon>Muroidea</taxon>
        <taxon>Muridae</taxon>
        <taxon>Murinae</taxon>
        <taxon>Mus</taxon>
        <taxon>Mus</taxon>
    </lineage>
</organism>
<dbReference type="EMBL" id="AF079901">
    <property type="protein sequence ID" value="AAC32189.1"/>
    <property type="molecule type" value="mRNA"/>
</dbReference>
<dbReference type="EMBL" id="AK133836">
    <property type="protein sequence ID" value="BAE21873.1"/>
    <property type="molecule type" value="mRNA"/>
</dbReference>
<dbReference type="EMBL" id="AK134515">
    <property type="protein sequence ID" value="BAE22167.1"/>
    <property type="molecule type" value="mRNA"/>
</dbReference>
<dbReference type="EMBL" id="AK147799">
    <property type="protein sequence ID" value="BAE28147.1"/>
    <property type="molecule type" value="mRNA"/>
</dbReference>
<dbReference type="EMBL" id="AK154972">
    <property type="protein sequence ID" value="BAE32964.1"/>
    <property type="molecule type" value="mRNA"/>
</dbReference>
<dbReference type="EMBL" id="AK161386">
    <property type="protein sequence ID" value="BAE36365.1"/>
    <property type="molecule type" value="mRNA"/>
</dbReference>
<dbReference type="EMBL" id="BX000359">
    <property type="status" value="NOT_ANNOTATED_CDS"/>
    <property type="molecule type" value="Genomic_DNA"/>
</dbReference>
<dbReference type="EMBL" id="CH466596">
    <property type="protein sequence ID" value="EDL12868.1"/>
    <property type="molecule type" value="Genomic_DNA"/>
</dbReference>
<dbReference type="EMBL" id="BC008542">
    <property type="protein sequence ID" value="AAH08542.1"/>
    <property type="molecule type" value="mRNA"/>
</dbReference>
<dbReference type="CCDS" id="CCDS25070.1"/>
<dbReference type="RefSeq" id="NP_058090.2">
    <property type="nucleotide sequence ID" value="NM_016810.3"/>
</dbReference>
<dbReference type="SMR" id="O88630"/>
<dbReference type="BioGRID" id="207294">
    <property type="interactions" value="7"/>
</dbReference>
<dbReference type="FunCoup" id="O88630">
    <property type="interactions" value="3935"/>
</dbReference>
<dbReference type="STRING" id="10090.ENSMUSP00000010536"/>
<dbReference type="GlyGen" id="O88630">
    <property type="glycosylation" value="1 site, 1 N-linked glycan (1 site)"/>
</dbReference>
<dbReference type="iPTMnet" id="O88630"/>
<dbReference type="PhosphoSitePlus" id="O88630"/>
<dbReference type="SwissPalm" id="O88630"/>
<dbReference type="PaxDb" id="10090-ENSMUSP00000010536"/>
<dbReference type="PeptideAtlas" id="O88630"/>
<dbReference type="ProteomicsDB" id="271009"/>
<dbReference type="Pumba" id="O88630"/>
<dbReference type="Antibodypedia" id="15149">
    <property type="antibodies" value="187 antibodies from 29 providers"/>
</dbReference>
<dbReference type="DNASU" id="53334"/>
<dbReference type="Ensembl" id="ENSMUST00000010536.9">
    <property type="protein sequence ID" value="ENSMUSP00000010536.9"/>
    <property type="gene ID" value="ENSMUSG00000010392.9"/>
</dbReference>
<dbReference type="GeneID" id="53334"/>
<dbReference type="KEGG" id="mmu:53334"/>
<dbReference type="UCSC" id="uc007kfz.1">
    <property type="organism name" value="mouse"/>
</dbReference>
<dbReference type="AGR" id="MGI:1858260"/>
<dbReference type="CTD" id="9527"/>
<dbReference type="MGI" id="MGI:1858260">
    <property type="gene designation" value="Gosr1"/>
</dbReference>
<dbReference type="VEuPathDB" id="HostDB:ENSMUSG00000010392"/>
<dbReference type="eggNOG" id="KOG3208">
    <property type="taxonomic scope" value="Eukaryota"/>
</dbReference>
<dbReference type="GeneTree" id="ENSGT00390000008688"/>
<dbReference type="HOGENOM" id="CLU_078034_0_0_1"/>
<dbReference type="InParanoid" id="O88630"/>
<dbReference type="OMA" id="QAYAVND"/>
<dbReference type="OrthoDB" id="422156at2759"/>
<dbReference type="PhylomeDB" id="O88630"/>
<dbReference type="TreeFam" id="TF105782"/>
<dbReference type="Reactome" id="R-MMU-6807878">
    <property type="pathway name" value="COPI-mediated anterograde transport"/>
</dbReference>
<dbReference type="Reactome" id="R-MMU-6811438">
    <property type="pathway name" value="Intra-Golgi traffic"/>
</dbReference>
<dbReference type="BioGRID-ORCS" id="53334">
    <property type="hits" value="20 hits in 78 CRISPR screens"/>
</dbReference>
<dbReference type="PRO" id="PR:O88630"/>
<dbReference type="Proteomes" id="UP000000589">
    <property type="component" value="Chromosome 11"/>
</dbReference>
<dbReference type="RNAct" id="O88630">
    <property type="molecule type" value="protein"/>
</dbReference>
<dbReference type="Bgee" id="ENSMUSG00000010392">
    <property type="expression patterns" value="Expressed in lumbar subsegment of spinal cord and 240 other cell types or tissues"/>
</dbReference>
<dbReference type="GO" id="GO:0005801">
    <property type="term" value="C:cis-Golgi network"/>
    <property type="evidence" value="ECO:0007669"/>
    <property type="project" value="InterPro"/>
</dbReference>
<dbReference type="GO" id="GO:0005794">
    <property type="term" value="C:Golgi apparatus"/>
    <property type="evidence" value="ECO:0000314"/>
    <property type="project" value="MGI"/>
</dbReference>
<dbReference type="GO" id="GO:0000139">
    <property type="term" value="C:Golgi membrane"/>
    <property type="evidence" value="ECO:0000314"/>
    <property type="project" value="MGI"/>
</dbReference>
<dbReference type="GO" id="GO:0006888">
    <property type="term" value="P:endoplasmic reticulum to Golgi vesicle-mediated transport"/>
    <property type="evidence" value="ECO:0000266"/>
    <property type="project" value="MGI"/>
</dbReference>
<dbReference type="GO" id="GO:0015031">
    <property type="term" value="P:protein transport"/>
    <property type="evidence" value="ECO:0007669"/>
    <property type="project" value="UniProtKB-KW"/>
</dbReference>
<dbReference type="CDD" id="cd15864">
    <property type="entry name" value="SNARE_GS28"/>
    <property type="match status" value="1"/>
</dbReference>
<dbReference type="InterPro" id="IPR023601">
    <property type="entry name" value="Golgi_SNAP_su1"/>
</dbReference>
<dbReference type="PANTHER" id="PTHR21094:SF2">
    <property type="entry name" value="GOLGI SNAP RECEPTOR COMPLEX MEMBER 1"/>
    <property type="match status" value="1"/>
</dbReference>
<dbReference type="PANTHER" id="PTHR21094">
    <property type="entry name" value="GOS-28 SNARE- RELATED"/>
    <property type="match status" value="1"/>
</dbReference>
<dbReference type="Pfam" id="PF12352">
    <property type="entry name" value="V-SNARE_C"/>
    <property type="match status" value="1"/>
</dbReference>
<dbReference type="PIRSF" id="PIRSF027109">
    <property type="entry name" value="Golgi_SNARE"/>
    <property type="match status" value="1"/>
</dbReference>
<proteinExistence type="evidence at protein level"/>
<name>GOSR1_MOUSE</name>
<feature type="initiator methionine" description="Removed" evidence="2">
    <location>
        <position position="1"/>
    </location>
</feature>
<feature type="chain" id="PRO_0000212543" description="Golgi SNAP receptor complex member 1">
    <location>
        <begin position="2"/>
        <end position="250"/>
    </location>
</feature>
<feature type="topological domain" description="Cytoplasmic" evidence="3">
    <location>
        <begin position="2"/>
        <end position="229"/>
    </location>
</feature>
<feature type="transmembrane region" description="Helical; Anchor for type IV membrane protein" evidence="3">
    <location>
        <begin position="230"/>
        <end position="250"/>
    </location>
</feature>
<feature type="region of interest" description="Disordered" evidence="4">
    <location>
        <begin position="37"/>
        <end position="59"/>
    </location>
</feature>
<feature type="coiled-coil region" evidence="3">
    <location>
        <begin position="9"/>
        <end position="27"/>
    </location>
</feature>
<feature type="coiled-coil region" evidence="3">
    <location>
        <begin position="72"/>
        <end position="93"/>
    </location>
</feature>
<feature type="compositionally biased region" description="Basic and acidic residues" evidence="4">
    <location>
        <begin position="41"/>
        <end position="51"/>
    </location>
</feature>
<feature type="modified residue" description="N-acetylalanine" evidence="2">
    <location>
        <position position="2"/>
    </location>
</feature>
<feature type="modified residue" description="Phosphoserine" evidence="2">
    <location>
        <position position="141"/>
    </location>
</feature>
<feature type="sequence conflict" description="In Ref. 1; AAC32189." evidence="6" ref="1">
    <original>F</original>
    <variation>S</variation>
    <location>
        <position position="30"/>
    </location>
</feature>
<sequence>MAAGTSNYWEDLRKQARQLENELDLKLVSFSKLCTSYSHSGSRDGGRDRYSSDTTPLLNGSSQDRMFETMAIEIEQLLARLTGVNDKMAEYTHSAGVPSLNAALMHTLQRHRDILQDYTHEFHKTKANFTAIRERENLMGSVRKDIESYKSGSGVNNRRTELFLKEHDHLRNSDRLIEETISIAMATKENMTSQRGMLKSIHSKMNTLANRFPAVNSLIQRINLRKRRDSLILGGVIGICTILLLLYAFH</sequence>